<comment type="function">
    <text evidence="1">Allows the formation of correctly charged Gln-tRNA(Gln) through the transamidation of misacylated Glu-tRNA(Gln) in organisms which lack glutaminyl-tRNA synthetase. The reaction takes place in the presence of glutamine and ATP through an activated gamma-phospho-Glu-tRNA(Gln).</text>
</comment>
<comment type="catalytic activity">
    <reaction evidence="1">
        <text>L-glutamyl-tRNA(Gln) + L-glutamine + ATP + H2O = L-glutaminyl-tRNA(Gln) + L-glutamate + ADP + phosphate + H(+)</text>
        <dbReference type="Rhea" id="RHEA:17521"/>
        <dbReference type="Rhea" id="RHEA-COMP:9681"/>
        <dbReference type="Rhea" id="RHEA-COMP:9684"/>
        <dbReference type="ChEBI" id="CHEBI:15377"/>
        <dbReference type="ChEBI" id="CHEBI:15378"/>
        <dbReference type="ChEBI" id="CHEBI:29985"/>
        <dbReference type="ChEBI" id="CHEBI:30616"/>
        <dbReference type="ChEBI" id="CHEBI:43474"/>
        <dbReference type="ChEBI" id="CHEBI:58359"/>
        <dbReference type="ChEBI" id="CHEBI:78520"/>
        <dbReference type="ChEBI" id="CHEBI:78521"/>
        <dbReference type="ChEBI" id="CHEBI:456216"/>
        <dbReference type="EC" id="6.3.5.7"/>
    </reaction>
</comment>
<comment type="subunit">
    <text evidence="1">Heterotrimer of A, B and C subunits.</text>
</comment>
<comment type="similarity">
    <text evidence="1">Belongs to the amidase family. GatA subfamily.</text>
</comment>
<proteinExistence type="inferred from homology"/>
<name>GATA_DEHMC</name>
<dbReference type="EC" id="6.3.5.7" evidence="1"/>
<dbReference type="EMBL" id="AJ965256">
    <property type="protein sequence ID" value="CAI83342.1"/>
    <property type="molecule type" value="Genomic_DNA"/>
</dbReference>
<dbReference type="RefSeq" id="WP_011309693.1">
    <property type="nucleotide sequence ID" value="NC_007356.1"/>
</dbReference>
<dbReference type="SMR" id="Q3ZYM5"/>
<dbReference type="KEGG" id="deh:cbdbA1284"/>
<dbReference type="HOGENOM" id="CLU_009600_0_3_0"/>
<dbReference type="Proteomes" id="UP000000433">
    <property type="component" value="Chromosome"/>
</dbReference>
<dbReference type="GO" id="GO:0030956">
    <property type="term" value="C:glutamyl-tRNA(Gln) amidotransferase complex"/>
    <property type="evidence" value="ECO:0007669"/>
    <property type="project" value="InterPro"/>
</dbReference>
<dbReference type="GO" id="GO:0005524">
    <property type="term" value="F:ATP binding"/>
    <property type="evidence" value="ECO:0007669"/>
    <property type="project" value="UniProtKB-KW"/>
</dbReference>
<dbReference type="GO" id="GO:0050567">
    <property type="term" value="F:glutaminyl-tRNA synthase (glutamine-hydrolyzing) activity"/>
    <property type="evidence" value="ECO:0007669"/>
    <property type="project" value="UniProtKB-UniRule"/>
</dbReference>
<dbReference type="GO" id="GO:0006412">
    <property type="term" value="P:translation"/>
    <property type="evidence" value="ECO:0007669"/>
    <property type="project" value="UniProtKB-UniRule"/>
</dbReference>
<dbReference type="Gene3D" id="3.90.1300.10">
    <property type="entry name" value="Amidase signature (AS) domain"/>
    <property type="match status" value="1"/>
</dbReference>
<dbReference type="HAMAP" id="MF_00120">
    <property type="entry name" value="GatA"/>
    <property type="match status" value="1"/>
</dbReference>
<dbReference type="InterPro" id="IPR000120">
    <property type="entry name" value="Amidase"/>
</dbReference>
<dbReference type="InterPro" id="IPR020556">
    <property type="entry name" value="Amidase_CS"/>
</dbReference>
<dbReference type="InterPro" id="IPR023631">
    <property type="entry name" value="Amidase_dom"/>
</dbReference>
<dbReference type="InterPro" id="IPR036928">
    <property type="entry name" value="AS_sf"/>
</dbReference>
<dbReference type="InterPro" id="IPR004412">
    <property type="entry name" value="GatA"/>
</dbReference>
<dbReference type="NCBIfam" id="TIGR00132">
    <property type="entry name" value="gatA"/>
    <property type="match status" value="1"/>
</dbReference>
<dbReference type="PANTHER" id="PTHR11895:SF151">
    <property type="entry name" value="GLUTAMYL-TRNA(GLN) AMIDOTRANSFERASE SUBUNIT A"/>
    <property type="match status" value="1"/>
</dbReference>
<dbReference type="PANTHER" id="PTHR11895">
    <property type="entry name" value="TRANSAMIDASE"/>
    <property type="match status" value="1"/>
</dbReference>
<dbReference type="Pfam" id="PF01425">
    <property type="entry name" value="Amidase"/>
    <property type="match status" value="1"/>
</dbReference>
<dbReference type="SUPFAM" id="SSF75304">
    <property type="entry name" value="Amidase signature (AS) enzymes"/>
    <property type="match status" value="1"/>
</dbReference>
<dbReference type="PROSITE" id="PS00571">
    <property type="entry name" value="AMIDASES"/>
    <property type="match status" value="1"/>
</dbReference>
<sequence length="486" mass="52787">MTDLVKLTIAQSHKLLKDRKISSAELTKAHLERIEKLEPEIKAFMTVCPETALSQAEAADKAIKQGDIRPLTGIPMALKDVLCTKGIRTTCSSKMLENFVPPYNAHVVDKLAKEGAVLLGKTNMDEFAMGSSTENSAYFTTRNPWNTDKVPGGSSGGSAACVAASEAVFSLGSDTGGSIRQPASFCSVTGYKPSYGMVSRYGLVAFASSLDQIGPFTKDAMDCALVMNAIAGFDDRDSTSVPQTVPDFNSGLDGNIKGFKLGVPKEYFSQNMRPDITEKINDALGVLSGLGASIDREVSLPHTPYALAVYYILAPSEASANLSRYDGVKYGYSYNQTENMWEAMEKTRAKGFGSEVKRRIMIGTYALSAGYYDAWYVKAQKVRTLISQEFNNAFEKYDALITPTTPNLPFSIGEKLNDPFEMYMCDTCTIPINIAGLPAVSIPAGFVDGLPVGLQIIGKPFADQTIMRIAHAFQCATTWHKETPRL</sequence>
<evidence type="ECO:0000255" key="1">
    <source>
        <dbReference type="HAMAP-Rule" id="MF_00120"/>
    </source>
</evidence>
<gene>
    <name evidence="1" type="primary">gatA</name>
    <name type="ordered locus">cbdbA1284</name>
</gene>
<accession>Q3ZYM5</accession>
<keyword id="KW-0067">ATP-binding</keyword>
<keyword id="KW-0436">Ligase</keyword>
<keyword id="KW-0547">Nucleotide-binding</keyword>
<keyword id="KW-0648">Protein biosynthesis</keyword>
<organism>
    <name type="scientific">Dehalococcoides mccartyi (strain CBDB1)</name>
    <dbReference type="NCBI Taxonomy" id="255470"/>
    <lineage>
        <taxon>Bacteria</taxon>
        <taxon>Bacillati</taxon>
        <taxon>Chloroflexota</taxon>
        <taxon>Dehalococcoidia</taxon>
        <taxon>Dehalococcoidales</taxon>
        <taxon>Dehalococcoidaceae</taxon>
        <taxon>Dehalococcoides</taxon>
    </lineage>
</organism>
<protein>
    <recommendedName>
        <fullName evidence="1">Glutamyl-tRNA(Gln) amidotransferase subunit A</fullName>
        <shortName evidence="1">Glu-ADT subunit A</shortName>
        <ecNumber evidence="1">6.3.5.7</ecNumber>
    </recommendedName>
</protein>
<reference key="1">
    <citation type="journal article" date="2005" name="Nat. Biotechnol.">
        <title>Genome sequence of the chlorinated compound-respiring bacterium Dehalococcoides species strain CBDB1.</title>
        <authorList>
            <person name="Kube M."/>
            <person name="Beck A."/>
            <person name="Zinder S.H."/>
            <person name="Kuhl H."/>
            <person name="Reinhardt R."/>
            <person name="Adrian L."/>
        </authorList>
    </citation>
    <scope>NUCLEOTIDE SEQUENCE [LARGE SCALE GENOMIC DNA]</scope>
    <source>
        <strain>CBDB1</strain>
    </source>
</reference>
<feature type="chain" id="PRO_0000241094" description="Glutamyl-tRNA(Gln) amidotransferase subunit A">
    <location>
        <begin position="1"/>
        <end position="486"/>
    </location>
</feature>
<feature type="active site" description="Charge relay system" evidence="1">
    <location>
        <position position="79"/>
    </location>
</feature>
<feature type="active site" description="Charge relay system" evidence="1">
    <location>
        <position position="154"/>
    </location>
</feature>
<feature type="active site" description="Acyl-ester intermediate" evidence="1">
    <location>
        <position position="178"/>
    </location>
</feature>